<gene>
    <name type="primary">Necab2</name>
    <name type="synonym">Efcbp2</name>
</gene>
<sequence>MCERAARLCRAGAHRLLREPPPQGRALGGLLRWVGARMGEPRAPLVPDIPSADPGPGPAASRGGTAVILDIFRRADKNDDGKLSLEEFQLFFADGVLNEKELEGLFHTIDSDNTNHVDTKELCDYFVEHMGDYEDVLASLETLNHSVLKAMGYTKKVYEGGSNVDQFVTRFLLKETANQIQSLLSSVESAVEAIEEQTSQIRQDHCKPSHAVNESRYGGPTPPYIPNHKLVAPEPMKSLPVATGEPKEDGLEGQISRLAELIGRLESKTLSFDLQQRLSDEEGTNMHLQLVRQEMAVCPEQLSEFLDSLRQYLRSTAEERNCFHVAAVRMADGLTFVIYEFWETEEEWKRHLQSPVCKAFRHVKVDTLSQPEALSQISVPAAWCTSGRD</sequence>
<comment type="function">
    <text evidence="2">May act as a signaling scaffold protein that senses intracellular calcium. Can modulate ligand-induced internalization of ADORA2A and coupling efficiency of mGluR5/GRM5; for both receptors may regulate signaling activity such as promoting MAPK1/3 (ERK1/2) activation.</text>
</comment>
<comment type="subunit">
    <text evidence="1 2">Interacts (calcium-dependent) with ADORA2A and GRM5.</text>
</comment>
<comment type="subcellular location">
    <subcellularLocation>
        <location evidence="5">Cytoplasm</location>
    </subcellularLocation>
    <subcellularLocation>
        <location evidence="1">Cell projection</location>
        <location evidence="1">Dendrite</location>
    </subcellularLocation>
    <subcellularLocation>
        <location evidence="1">Cell projection</location>
        <location evidence="1">Axon</location>
    </subcellularLocation>
    <subcellularLocation>
        <location evidence="2">Cell membrane</location>
    </subcellularLocation>
    <text evidence="1 2 6">Colocalizes with ADORA2A and/or mGluR5/GRM5 at the plasma membrane (By similarity). Found in neuronal somata (PubMed:26843217). Detected in the cytoplasm of striatal neurons, at postsynaptic sites, filling dendritic shafts and spines, and at presynaptic sites, filling axon terminals (By similarity).</text>
</comment>
<comment type="alternative products">
    <event type="alternative splicing"/>
    <isoform>
        <id>Q91ZP9-1</id>
        <name>1</name>
        <sequence type="displayed"/>
    </isoform>
    <isoform>
        <id>Q91ZP9-2</id>
        <name>2</name>
        <sequence type="described" ref="VSP_024215"/>
    </isoform>
</comment>
<comment type="tissue specificity">
    <text evidence="5 6">Expressed in the iris, in the ciliary margin of the retina and in the inner portion of the neural retina. Expressed in the spinal dorsal horn with especially strong expression in lamina IIi; found in excitory synaptic boutons (at protein level).</text>
</comment>
<comment type="developmental stage">
    <text evidence="5">Expressed in retina, retinal pigmented epithelium, Rathke's pouch, corneal epithelium, the infundibulum and olfactory placodes at 10.5 dpc (at protein level). Expressed in the inner region of the neural retina, including the ganglion cell layer at 17.5 dpc (at protein level). Expressed in the optic sulcus and in the pre-tectum at 8.5 dpc. Expressed in the optic vesicle, in the midline position in the roof of the midbrain and in the pre-tectum at 9.0-9.5 dpc. Expressed in the olfactory placodes at 10.5 dpc. Expressed in retinal-pigmented epithelium and in the neural retina, with strong expression in the ciliary margin at 12.5-13.5 dpc.</text>
</comment>
<comment type="induction">
    <text evidence="5">Up-regulated by PAX6.</text>
</comment>
<comment type="sequence caution" evidence="8">
    <conflict type="erroneous initiation">
        <sequence resource="EMBL-CDS" id="BAC38589"/>
    </conflict>
</comment>
<accession>Q91ZP9</accession>
<accession>Q1LZI4</accession>
<accession>Q8C492</accession>
<name>NECA2_MOUSE</name>
<dbReference type="EMBL" id="AF411253">
    <property type="protein sequence ID" value="AAL04151.1"/>
    <property type="molecule type" value="mRNA"/>
</dbReference>
<dbReference type="EMBL" id="BC115857">
    <property type="protein sequence ID" value="AAI15858.1"/>
    <property type="molecule type" value="mRNA"/>
</dbReference>
<dbReference type="EMBL" id="BC115963">
    <property type="protein sequence ID" value="AAI15964.1"/>
    <property type="molecule type" value="mRNA"/>
</dbReference>
<dbReference type="EMBL" id="AK082727">
    <property type="protein sequence ID" value="BAC38589.1"/>
    <property type="status" value="ALT_INIT"/>
    <property type="molecule type" value="mRNA"/>
</dbReference>
<dbReference type="CCDS" id="CCDS22705.1">
    <molecule id="Q91ZP9-1"/>
</dbReference>
<dbReference type="RefSeq" id="NP_473436.1">
    <molecule id="Q91ZP9-1"/>
    <property type="nucleotide sequence ID" value="NM_054095.2"/>
</dbReference>
<dbReference type="RefSeq" id="XP_017168015.1">
    <molecule id="Q91ZP9-2"/>
    <property type="nucleotide sequence ID" value="XM_017312526.3"/>
</dbReference>
<dbReference type="RefSeq" id="XP_036009621.1">
    <molecule id="Q91ZP9-2"/>
    <property type="nucleotide sequence ID" value="XM_036153728.1"/>
</dbReference>
<dbReference type="SMR" id="Q91ZP9"/>
<dbReference type="BioGRID" id="228171">
    <property type="interactions" value="8"/>
</dbReference>
<dbReference type="FunCoup" id="Q91ZP9">
    <property type="interactions" value="721"/>
</dbReference>
<dbReference type="STRING" id="10090.ENSMUSP00000095966"/>
<dbReference type="GlyGen" id="Q91ZP9">
    <property type="glycosylation" value="1 site"/>
</dbReference>
<dbReference type="iPTMnet" id="Q91ZP9"/>
<dbReference type="PhosphoSitePlus" id="Q91ZP9"/>
<dbReference type="PaxDb" id="10090-ENSMUSP00000095966"/>
<dbReference type="ProteomicsDB" id="253053">
    <molecule id="Q91ZP9-1"/>
</dbReference>
<dbReference type="ProteomicsDB" id="253054">
    <molecule id="Q91ZP9-2"/>
</dbReference>
<dbReference type="Antibodypedia" id="2918">
    <property type="antibodies" value="111 antibodies from 22 providers"/>
</dbReference>
<dbReference type="DNASU" id="117148"/>
<dbReference type="Ensembl" id="ENSMUST00000098363.10">
    <molecule id="Q91ZP9-1"/>
    <property type="protein sequence ID" value="ENSMUSP00000095966.4"/>
    <property type="gene ID" value="ENSMUSG00000031837.15"/>
</dbReference>
<dbReference type="GeneID" id="117148"/>
<dbReference type="KEGG" id="mmu:117148"/>
<dbReference type="UCSC" id="uc009npq.1">
    <molecule id="Q91ZP9-1"/>
    <property type="organism name" value="mouse"/>
</dbReference>
<dbReference type="AGR" id="MGI:2152211"/>
<dbReference type="CTD" id="54550"/>
<dbReference type="MGI" id="MGI:2152211">
    <property type="gene designation" value="Necab2"/>
</dbReference>
<dbReference type="VEuPathDB" id="HostDB:ENSMUSG00000031837"/>
<dbReference type="eggNOG" id="ENOG502QRUC">
    <property type="taxonomic scope" value="Eukaryota"/>
</dbReference>
<dbReference type="GeneTree" id="ENSGT00950000183131"/>
<dbReference type="HOGENOM" id="CLU_041553_1_0_1"/>
<dbReference type="InParanoid" id="Q91ZP9"/>
<dbReference type="OMA" id="CKSFQHV"/>
<dbReference type="OrthoDB" id="427950at2759"/>
<dbReference type="PhylomeDB" id="Q91ZP9"/>
<dbReference type="TreeFam" id="TF331029"/>
<dbReference type="BioGRID-ORCS" id="117148">
    <property type="hits" value="0 hits in 78 CRISPR screens"/>
</dbReference>
<dbReference type="CD-CODE" id="CE726F99">
    <property type="entry name" value="Postsynaptic density"/>
</dbReference>
<dbReference type="ChiTaRS" id="Necab2">
    <property type="organism name" value="mouse"/>
</dbReference>
<dbReference type="PRO" id="PR:Q91ZP9"/>
<dbReference type="Proteomes" id="UP000000589">
    <property type="component" value="Chromosome 8"/>
</dbReference>
<dbReference type="RNAct" id="Q91ZP9">
    <property type="molecule type" value="protein"/>
</dbReference>
<dbReference type="Bgee" id="ENSMUSG00000031837">
    <property type="expression patterns" value="Expressed in habenula and 161 other cell types or tissues"/>
</dbReference>
<dbReference type="GO" id="GO:0030424">
    <property type="term" value="C:axon"/>
    <property type="evidence" value="ECO:0007669"/>
    <property type="project" value="UniProtKB-SubCell"/>
</dbReference>
<dbReference type="GO" id="GO:0005737">
    <property type="term" value="C:cytoplasm"/>
    <property type="evidence" value="ECO:0007669"/>
    <property type="project" value="UniProtKB-SubCell"/>
</dbReference>
<dbReference type="GO" id="GO:0030425">
    <property type="term" value="C:dendrite"/>
    <property type="evidence" value="ECO:0007669"/>
    <property type="project" value="UniProtKB-SubCell"/>
</dbReference>
<dbReference type="GO" id="GO:0005886">
    <property type="term" value="C:plasma membrane"/>
    <property type="evidence" value="ECO:0007669"/>
    <property type="project" value="UniProtKB-SubCell"/>
</dbReference>
<dbReference type="GO" id="GO:0098794">
    <property type="term" value="C:postsynapse"/>
    <property type="evidence" value="ECO:0007669"/>
    <property type="project" value="Ensembl"/>
</dbReference>
<dbReference type="GO" id="GO:0098793">
    <property type="term" value="C:presynapse"/>
    <property type="evidence" value="ECO:0007669"/>
    <property type="project" value="Ensembl"/>
</dbReference>
<dbReference type="GO" id="GO:0031687">
    <property type="term" value="F:A2A adenosine receptor binding"/>
    <property type="evidence" value="ECO:0007669"/>
    <property type="project" value="Ensembl"/>
</dbReference>
<dbReference type="GO" id="GO:0005509">
    <property type="term" value="F:calcium ion binding"/>
    <property type="evidence" value="ECO:0007669"/>
    <property type="project" value="InterPro"/>
</dbReference>
<dbReference type="GO" id="GO:0031802">
    <property type="term" value="F:type 5 metabotropic glutamate receptor binding"/>
    <property type="evidence" value="ECO:0007669"/>
    <property type="project" value="Ensembl"/>
</dbReference>
<dbReference type="GO" id="GO:1904021">
    <property type="term" value="P:negative regulation of G protein-coupled receptor internalization"/>
    <property type="evidence" value="ECO:0007669"/>
    <property type="project" value="Ensembl"/>
</dbReference>
<dbReference type="GO" id="GO:0060168">
    <property type="term" value="P:positive regulation of adenosine receptor signaling pathway"/>
    <property type="evidence" value="ECO:0007669"/>
    <property type="project" value="Ensembl"/>
</dbReference>
<dbReference type="GO" id="GO:0070374">
    <property type="term" value="P:positive regulation of ERK1 and ERK2 cascade"/>
    <property type="evidence" value="ECO:0007669"/>
    <property type="project" value="Ensembl"/>
</dbReference>
<dbReference type="GO" id="GO:1900451">
    <property type="term" value="P:positive regulation of glutamate receptor signaling pathway"/>
    <property type="evidence" value="ECO:0007669"/>
    <property type="project" value="Ensembl"/>
</dbReference>
<dbReference type="GO" id="GO:1905477">
    <property type="term" value="P:positive regulation of protein localization to membrane"/>
    <property type="evidence" value="ECO:0007669"/>
    <property type="project" value="Ensembl"/>
</dbReference>
<dbReference type="CDD" id="cd00051">
    <property type="entry name" value="EFh"/>
    <property type="match status" value="1"/>
</dbReference>
<dbReference type="FunFam" id="1.10.238.10:FF:000334">
    <property type="entry name" value="N-terminal EF-hand calcium binding protein 2"/>
    <property type="match status" value="1"/>
</dbReference>
<dbReference type="FunFam" id="3.30.70.100:FF:000028">
    <property type="entry name" value="N-terminal EF-hand calcium-binding protein 2"/>
    <property type="match status" value="1"/>
</dbReference>
<dbReference type="Gene3D" id="3.30.70.100">
    <property type="match status" value="1"/>
</dbReference>
<dbReference type="Gene3D" id="1.10.238.10">
    <property type="entry name" value="EF-hand"/>
    <property type="match status" value="1"/>
</dbReference>
<dbReference type="InterPro" id="IPR007138">
    <property type="entry name" value="ABM_dom"/>
</dbReference>
<dbReference type="InterPro" id="IPR011008">
    <property type="entry name" value="Dimeric_a/b-barrel"/>
</dbReference>
<dbReference type="InterPro" id="IPR011992">
    <property type="entry name" value="EF-hand-dom_pair"/>
</dbReference>
<dbReference type="InterPro" id="IPR018247">
    <property type="entry name" value="EF_Hand_1_Ca_BS"/>
</dbReference>
<dbReference type="InterPro" id="IPR002048">
    <property type="entry name" value="EF_hand_dom"/>
</dbReference>
<dbReference type="InterPro" id="IPR039862">
    <property type="entry name" value="NECAB1/2/3"/>
</dbReference>
<dbReference type="PANTHER" id="PTHR12178">
    <property type="entry name" value="EF-HAND DOMAIN-CONTAINING PROTEIN"/>
    <property type="match status" value="1"/>
</dbReference>
<dbReference type="PANTHER" id="PTHR12178:SF2">
    <property type="entry name" value="N-TERMINAL EF-HAND CALCIUM-BINDING PROTEIN 2"/>
    <property type="match status" value="1"/>
</dbReference>
<dbReference type="Pfam" id="PF03992">
    <property type="entry name" value="ABM"/>
    <property type="match status" value="1"/>
</dbReference>
<dbReference type="Pfam" id="PF13499">
    <property type="entry name" value="EF-hand_7"/>
    <property type="match status" value="1"/>
</dbReference>
<dbReference type="SMART" id="SM00054">
    <property type="entry name" value="EFh"/>
    <property type="match status" value="2"/>
</dbReference>
<dbReference type="SUPFAM" id="SSF54909">
    <property type="entry name" value="Dimeric alpha+beta barrel"/>
    <property type="match status" value="1"/>
</dbReference>
<dbReference type="SUPFAM" id="SSF47473">
    <property type="entry name" value="EF-hand"/>
    <property type="match status" value="1"/>
</dbReference>
<dbReference type="PROSITE" id="PS51725">
    <property type="entry name" value="ABM"/>
    <property type="match status" value="1"/>
</dbReference>
<dbReference type="PROSITE" id="PS00018">
    <property type="entry name" value="EF_HAND_1"/>
    <property type="match status" value="2"/>
</dbReference>
<dbReference type="PROSITE" id="PS50222">
    <property type="entry name" value="EF_HAND_2"/>
    <property type="match status" value="2"/>
</dbReference>
<protein>
    <recommendedName>
        <fullName>N-terminal EF-hand calcium-binding protein 2</fullName>
        <shortName>EF-hand calcium-binding protein 2</shortName>
    </recommendedName>
    <alternativeName>
        <fullName>Neuronal calcium-binding protein 2</fullName>
    </alternativeName>
</protein>
<proteinExistence type="evidence at protein level"/>
<keyword id="KW-0025">Alternative splicing</keyword>
<keyword id="KW-0106">Calcium</keyword>
<keyword id="KW-1003">Cell membrane</keyword>
<keyword id="KW-0966">Cell projection</keyword>
<keyword id="KW-0175">Coiled coil</keyword>
<keyword id="KW-0963">Cytoplasm</keyword>
<keyword id="KW-0472">Membrane</keyword>
<keyword id="KW-0479">Metal-binding</keyword>
<keyword id="KW-0488">Methylation</keyword>
<keyword id="KW-1185">Reference proteome</keyword>
<keyword id="KW-0677">Repeat</keyword>
<reference key="1">
    <citation type="journal article" date="2001" name="Development">
        <title>Isolation and characterization of a downstream target of Pax6 in the mammalian retinal primordium.</title>
        <authorList>
            <person name="Bernier G."/>
            <person name="Vukovich W."/>
            <person name="Neidhardt L."/>
            <person name="Herrmann B.G."/>
            <person name="Gruss P."/>
        </authorList>
    </citation>
    <scope>NUCLEOTIDE SEQUENCE [MRNA] (ISOFORM 1)</scope>
    <scope>INDUCTION</scope>
    <scope>TISSUE SPECIFICITY</scope>
    <scope>DEVELOPMENTAL STAGE</scope>
    <scope>SUBCELLULAR LOCATION</scope>
    <source>
        <strain>NMRI</strain>
        <tissue>Embryo</tissue>
    </source>
</reference>
<reference key="2">
    <citation type="journal article" date="2004" name="Genome Res.">
        <title>The status, quality, and expansion of the NIH full-length cDNA project: the Mammalian Gene Collection (MGC).</title>
        <authorList>
            <consortium name="The MGC Project Team"/>
        </authorList>
    </citation>
    <scope>NUCLEOTIDE SEQUENCE [LARGE SCALE MRNA] (ISOFORM 2)</scope>
</reference>
<reference key="3">
    <citation type="journal article" date="2005" name="Science">
        <title>The transcriptional landscape of the mammalian genome.</title>
        <authorList>
            <person name="Carninci P."/>
            <person name="Kasukawa T."/>
            <person name="Katayama S."/>
            <person name="Gough J."/>
            <person name="Frith M.C."/>
            <person name="Maeda N."/>
            <person name="Oyama R."/>
            <person name="Ravasi T."/>
            <person name="Lenhard B."/>
            <person name="Wells C."/>
            <person name="Kodzius R."/>
            <person name="Shimokawa K."/>
            <person name="Bajic V.B."/>
            <person name="Brenner S.E."/>
            <person name="Batalov S."/>
            <person name="Forrest A.R."/>
            <person name="Zavolan M."/>
            <person name="Davis M.J."/>
            <person name="Wilming L.G."/>
            <person name="Aidinis V."/>
            <person name="Allen J.E."/>
            <person name="Ambesi-Impiombato A."/>
            <person name="Apweiler R."/>
            <person name="Aturaliya R.N."/>
            <person name="Bailey T.L."/>
            <person name="Bansal M."/>
            <person name="Baxter L."/>
            <person name="Beisel K.W."/>
            <person name="Bersano T."/>
            <person name="Bono H."/>
            <person name="Chalk A.M."/>
            <person name="Chiu K.P."/>
            <person name="Choudhary V."/>
            <person name="Christoffels A."/>
            <person name="Clutterbuck D.R."/>
            <person name="Crowe M.L."/>
            <person name="Dalla E."/>
            <person name="Dalrymple B.P."/>
            <person name="de Bono B."/>
            <person name="Della Gatta G."/>
            <person name="di Bernardo D."/>
            <person name="Down T."/>
            <person name="Engstrom P."/>
            <person name="Fagiolini M."/>
            <person name="Faulkner G."/>
            <person name="Fletcher C.F."/>
            <person name="Fukushima T."/>
            <person name="Furuno M."/>
            <person name="Futaki S."/>
            <person name="Gariboldi M."/>
            <person name="Georgii-Hemming P."/>
            <person name="Gingeras T.R."/>
            <person name="Gojobori T."/>
            <person name="Green R.E."/>
            <person name="Gustincich S."/>
            <person name="Harbers M."/>
            <person name="Hayashi Y."/>
            <person name="Hensch T.K."/>
            <person name="Hirokawa N."/>
            <person name="Hill D."/>
            <person name="Huminiecki L."/>
            <person name="Iacono M."/>
            <person name="Ikeo K."/>
            <person name="Iwama A."/>
            <person name="Ishikawa T."/>
            <person name="Jakt M."/>
            <person name="Kanapin A."/>
            <person name="Katoh M."/>
            <person name="Kawasawa Y."/>
            <person name="Kelso J."/>
            <person name="Kitamura H."/>
            <person name="Kitano H."/>
            <person name="Kollias G."/>
            <person name="Krishnan S.P."/>
            <person name="Kruger A."/>
            <person name="Kummerfeld S.K."/>
            <person name="Kurochkin I.V."/>
            <person name="Lareau L.F."/>
            <person name="Lazarevic D."/>
            <person name="Lipovich L."/>
            <person name="Liu J."/>
            <person name="Liuni S."/>
            <person name="McWilliam S."/>
            <person name="Madan Babu M."/>
            <person name="Madera M."/>
            <person name="Marchionni L."/>
            <person name="Matsuda H."/>
            <person name="Matsuzawa S."/>
            <person name="Miki H."/>
            <person name="Mignone F."/>
            <person name="Miyake S."/>
            <person name="Morris K."/>
            <person name="Mottagui-Tabar S."/>
            <person name="Mulder N."/>
            <person name="Nakano N."/>
            <person name="Nakauchi H."/>
            <person name="Ng P."/>
            <person name="Nilsson R."/>
            <person name="Nishiguchi S."/>
            <person name="Nishikawa S."/>
            <person name="Nori F."/>
            <person name="Ohara O."/>
            <person name="Okazaki Y."/>
            <person name="Orlando V."/>
            <person name="Pang K.C."/>
            <person name="Pavan W.J."/>
            <person name="Pavesi G."/>
            <person name="Pesole G."/>
            <person name="Petrovsky N."/>
            <person name="Piazza S."/>
            <person name="Reed J."/>
            <person name="Reid J.F."/>
            <person name="Ring B.Z."/>
            <person name="Ringwald M."/>
            <person name="Rost B."/>
            <person name="Ruan Y."/>
            <person name="Salzberg S.L."/>
            <person name="Sandelin A."/>
            <person name="Schneider C."/>
            <person name="Schoenbach C."/>
            <person name="Sekiguchi K."/>
            <person name="Semple C.A."/>
            <person name="Seno S."/>
            <person name="Sessa L."/>
            <person name="Sheng Y."/>
            <person name="Shibata Y."/>
            <person name="Shimada H."/>
            <person name="Shimada K."/>
            <person name="Silva D."/>
            <person name="Sinclair B."/>
            <person name="Sperling S."/>
            <person name="Stupka E."/>
            <person name="Sugiura K."/>
            <person name="Sultana R."/>
            <person name="Takenaka Y."/>
            <person name="Taki K."/>
            <person name="Tammoja K."/>
            <person name="Tan S.L."/>
            <person name="Tang S."/>
            <person name="Taylor M.S."/>
            <person name="Tegner J."/>
            <person name="Teichmann S.A."/>
            <person name="Ueda H.R."/>
            <person name="van Nimwegen E."/>
            <person name="Verardo R."/>
            <person name="Wei C.L."/>
            <person name="Yagi K."/>
            <person name="Yamanishi H."/>
            <person name="Zabarovsky E."/>
            <person name="Zhu S."/>
            <person name="Zimmer A."/>
            <person name="Hide W."/>
            <person name="Bult C."/>
            <person name="Grimmond S.M."/>
            <person name="Teasdale R.D."/>
            <person name="Liu E.T."/>
            <person name="Brusic V."/>
            <person name="Quackenbush J."/>
            <person name="Wahlestedt C."/>
            <person name="Mattick J.S."/>
            <person name="Hume D.A."/>
            <person name="Kai C."/>
            <person name="Sasaki D."/>
            <person name="Tomaru Y."/>
            <person name="Fukuda S."/>
            <person name="Kanamori-Katayama M."/>
            <person name="Suzuki M."/>
            <person name="Aoki J."/>
            <person name="Arakawa T."/>
            <person name="Iida J."/>
            <person name="Imamura K."/>
            <person name="Itoh M."/>
            <person name="Kato T."/>
            <person name="Kawaji H."/>
            <person name="Kawagashira N."/>
            <person name="Kawashima T."/>
            <person name="Kojima M."/>
            <person name="Kondo S."/>
            <person name="Konno H."/>
            <person name="Nakano K."/>
            <person name="Ninomiya N."/>
            <person name="Nishio T."/>
            <person name="Okada M."/>
            <person name="Plessy C."/>
            <person name="Shibata K."/>
            <person name="Shiraki T."/>
            <person name="Suzuki S."/>
            <person name="Tagami M."/>
            <person name="Waki K."/>
            <person name="Watahiki A."/>
            <person name="Okamura-Oho Y."/>
            <person name="Suzuki H."/>
            <person name="Kawai J."/>
            <person name="Hayashizaki Y."/>
        </authorList>
    </citation>
    <scope>NUCLEOTIDE SEQUENCE [LARGE SCALE MRNA] OF 19-389 (ISOFORM 1)</scope>
    <source>
        <strain>C57BL/6J</strain>
        <tissue>Cerebellum</tissue>
    </source>
</reference>
<reference key="4">
    <citation type="journal article" date="2010" name="Cell">
        <title>A tissue-specific atlas of mouse protein phosphorylation and expression.</title>
        <authorList>
            <person name="Huttlin E.L."/>
            <person name="Jedrychowski M.P."/>
            <person name="Elias J.E."/>
            <person name="Goswami T."/>
            <person name="Rad R."/>
            <person name="Beausoleil S.A."/>
            <person name="Villen J."/>
            <person name="Haas W."/>
            <person name="Sowa M.E."/>
            <person name="Gygi S.P."/>
        </authorList>
    </citation>
    <scope>IDENTIFICATION BY MASS SPECTROMETRY [LARGE SCALE ANALYSIS]</scope>
    <source>
        <tissue>Brain</tissue>
    </source>
</reference>
<reference key="5">
    <citation type="journal article" date="2014" name="Mol. Cell. Proteomics">
        <title>Immunoaffinity enrichment and mass spectrometry analysis of protein methylation.</title>
        <authorList>
            <person name="Guo A."/>
            <person name="Gu H."/>
            <person name="Zhou J."/>
            <person name="Mulhern D."/>
            <person name="Wang Y."/>
            <person name="Lee K.A."/>
            <person name="Yang V."/>
            <person name="Aguiar M."/>
            <person name="Kornhauser J."/>
            <person name="Jia X."/>
            <person name="Ren J."/>
            <person name="Beausoleil S.A."/>
            <person name="Silva J.C."/>
            <person name="Vemulapalli V."/>
            <person name="Bedford M.T."/>
            <person name="Comb M.J."/>
        </authorList>
    </citation>
    <scope>METHYLATION [LARGE SCALE ANALYSIS] AT ARG-10 AND ARG-42</scope>
    <scope>IDENTIFICATION BY MASS SPECTROMETRY [LARGE SCALE ANALYSIS]</scope>
    <source>
        <tissue>Brain</tissue>
    </source>
</reference>
<reference key="6">
    <citation type="journal article" date="2016" name="Brain Struct. Funct.">
        <title>Comparative anatomical distribution of neuronal calcium-binding protein (NECAB) 1 and -2 in rodent and human spinal cord.</title>
        <authorList>
            <person name="Zhang M.D."/>
            <person name="Barde S."/>
            <person name="Szodorai E."/>
            <person name="Josephson A."/>
            <person name="Mitsios N."/>
            <person name="Watanabe M."/>
            <person name="Attems J."/>
            <person name="Lubec G."/>
            <person name="Kovacs G.G."/>
            <person name="Uhlen M."/>
            <person name="Mulder J."/>
            <person name="Harkany T."/>
            <person name="Hoekfelt T."/>
        </authorList>
    </citation>
    <scope>TISSUE SPECIFICITY</scope>
    <scope>SUBCELLULAR LOCATION</scope>
</reference>
<evidence type="ECO:0000250" key="1">
    <source>
        <dbReference type="UniProtKB" id="F1LQY6"/>
    </source>
</evidence>
<evidence type="ECO:0000250" key="2">
    <source>
        <dbReference type="UniProtKB" id="Q7Z6G3"/>
    </source>
</evidence>
<evidence type="ECO:0000255" key="3"/>
<evidence type="ECO:0000255" key="4">
    <source>
        <dbReference type="PROSITE-ProRule" id="PRU00448"/>
    </source>
</evidence>
<evidence type="ECO:0000269" key="5">
    <source>
    </source>
</evidence>
<evidence type="ECO:0000269" key="6">
    <source>
    </source>
</evidence>
<evidence type="ECO:0000303" key="7">
    <source>
    </source>
</evidence>
<evidence type="ECO:0000305" key="8"/>
<evidence type="ECO:0007744" key="9">
    <source>
    </source>
</evidence>
<organism>
    <name type="scientific">Mus musculus</name>
    <name type="common">Mouse</name>
    <dbReference type="NCBI Taxonomy" id="10090"/>
    <lineage>
        <taxon>Eukaryota</taxon>
        <taxon>Metazoa</taxon>
        <taxon>Chordata</taxon>
        <taxon>Craniata</taxon>
        <taxon>Vertebrata</taxon>
        <taxon>Euteleostomi</taxon>
        <taxon>Mammalia</taxon>
        <taxon>Eutheria</taxon>
        <taxon>Euarchontoglires</taxon>
        <taxon>Glires</taxon>
        <taxon>Rodentia</taxon>
        <taxon>Myomorpha</taxon>
        <taxon>Muroidea</taxon>
        <taxon>Muridae</taxon>
        <taxon>Murinae</taxon>
        <taxon>Mus</taxon>
        <taxon>Mus</taxon>
    </lineage>
</organism>
<feature type="chain" id="PRO_0000282614" description="N-terminal EF-hand calcium-binding protein 2">
    <location>
        <begin position="1"/>
        <end position="389"/>
    </location>
</feature>
<feature type="domain" description="EF-hand 1" evidence="4">
    <location>
        <begin position="63"/>
        <end position="98"/>
    </location>
</feature>
<feature type="domain" description="EF-hand 2" evidence="4">
    <location>
        <begin position="99"/>
        <end position="132"/>
    </location>
</feature>
<feature type="domain" description="ABM">
    <location>
        <begin position="289"/>
        <end position="377"/>
    </location>
</feature>
<feature type="coiled-coil region" evidence="3">
    <location>
        <begin position="173"/>
        <end position="198"/>
    </location>
</feature>
<feature type="binding site" evidence="4">
    <location>
        <position position="76"/>
    </location>
    <ligand>
        <name>Ca(2+)</name>
        <dbReference type="ChEBI" id="CHEBI:29108"/>
        <label>1</label>
    </ligand>
</feature>
<feature type="binding site" evidence="4">
    <location>
        <position position="78"/>
    </location>
    <ligand>
        <name>Ca(2+)</name>
        <dbReference type="ChEBI" id="CHEBI:29108"/>
        <label>1</label>
    </ligand>
</feature>
<feature type="binding site" evidence="4">
    <location>
        <position position="80"/>
    </location>
    <ligand>
        <name>Ca(2+)</name>
        <dbReference type="ChEBI" id="CHEBI:29108"/>
        <label>1</label>
    </ligand>
</feature>
<feature type="binding site" evidence="4">
    <location>
        <position position="82"/>
    </location>
    <ligand>
        <name>Ca(2+)</name>
        <dbReference type="ChEBI" id="CHEBI:29108"/>
        <label>1</label>
    </ligand>
</feature>
<feature type="binding site" evidence="4">
    <location>
        <position position="87"/>
    </location>
    <ligand>
        <name>Ca(2+)</name>
        <dbReference type="ChEBI" id="CHEBI:29108"/>
        <label>1</label>
    </ligand>
</feature>
<feature type="binding site" evidence="4">
    <location>
        <position position="110"/>
    </location>
    <ligand>
        <name>Ca(2+)</name>
        <dbReference type="ChEBI" id="CHEBI:29108"/>
        <label>2</label>
    </ligand>
</feature>
<feature type="binding site" evidence="4">
    <location>
        <position position="112"/>
    </location>
    <ligand>
        <name>Ca(2+)</name>
        <dbReference type="ChEBI" id="CHEBI:29108"/>
        <label>2</label>
    </ligand>
</feature>
<feature type="binding site" evidence="4">
    <location>
        <position position="114"/>
    </location>
    <ligand>
        <name>Ca(2+)</name>
        <dbReference type="ChEBI" id="CHEBI:29108"/>
        <label>2</label>
    </ligand>
</feature>
<feature type="binding site" evidence="4">
    <location>
        <position position="116"/>
    </location>
    <ligand>
        <name>Ca(2+)</name>
        <dbReference type="ChEBI" id="CHEBI:29108"/>
        <label>2</label>
    </ligand>
</feature>
<feature type="binding site" evidence="4">
    <location>
        <position position="121"/>
    </location>
    <ligand>
        <name>Ca(2+)</name>
        <dbReference type="ChEBI" id="CHEBI:29108"/>
        <label>2</label>
    </ligand>
</feature>
<feature type="modified residue" description="Omega-N-methylarginine" evidence="9">
    <location>
        <position position="10"/>
    </location>
</feature>
<feature type="modified residue" description="Asymmetric dimethylarginine" evidence="9">
    <location>
        <position position="42"/>
    </location>
</feature>
<feature type="splice variant" id="VSP_024215" description="In isoform 2." evidence="7">
    <location>
        <begin position="1"/>
        <end position="129"/>
    </location>
</feature>